<keyword id="KW-1003">Cell membrane</keyword>
<keyword id="KW-0210">Decarboxylase</keyword>
<keyword id="KW-0444">Lipid biosynthesis</keyword>
<keyword id="KW-0443">Lipid metabolism</keyword>
<keyword id="KW-0456">Lyase</keyword>
<keyword id="KW-0472">Membrane</keyword>
<keyword id="KW-0594">Phospholipid biosynthesis</keyword>
<keyword id="KW-1208">Phospholipid metabolism</keyword>
<keyword id="KW-0670">Pyruvate</keyword>
<keyword id="KW-0865">Zymogen</keyword>
<name>PSD_MYCSS</name>
<proteinExistence type="inferred from homology"/>
<feature type="chain" id="PRO_0000262229" description="Phosphatidylserine decarboxylase beta chain" evidence="1">
    <location>
        <begin position="1"/>
        <end position="203"/>
    </location>
</feature>
<feature type="chain" id="PRO_0000262230" description="Phosphatidylserine decarboxylase alpha chain" evidence="1">
    <location>
        <begin position="204"/>
        <end position="235"/>
    </location>
</feature>
<feature type="active site" description="Schiff-base intermediate with substrate; via pyruvic acid" evidence="1">
    <location>
        <position position="204"/>
    </location>
</feature>
<feature type="site" description="Cleavage (non-hydrolytic); by autocatalysis" evidence="1">
    <location>
        <begin position="203"/>
        <end position="204"/>
    </location>
</feature>
<feature type="modified residue" description="Pyruvic acid (Ser); by autocatalysis" evidence="1">
    <location>
        <position position="204"/>
    </location>
</feature>
<accession>Q1BEG9</accession>
<organism>
    <name type="scientific">Mycobacterium sp. (strain MCS)</name>
    <dbReference type="NCBI Taxonomy" id="164756"/>
    <lineage>
        <taxon>Bacteria</taxon>
        <taxon>Bacillati</taxon>
        <taxon>Actinomycetota</taxon>
        <taxon>Actinomycetes</taxon>
        <taxon>Mycobacteriales</taxon>
        <taxon>Mycobacteriaceae</taxon>
        <taxon>Mycobacterium</taxon>
    </lineage>
</organism>
<protein>
    <recommendedName>
        <fullName evidence="1">Phosphatidylserine decarboxylase proenzyme</fullName>
        <ecNumber evidence="1">4.1.1.65</ecNumber>
    </recommendedName>
    <component>
        <recommendedName>
            <fullName evidence="1">Phosphatidylserine decarboxylase alpha chain</fullName>
        </recommendedName>
    </component>
    <component>
        <recommendedName>
            <fullName evidence="1">Phosphatidylserine decarboxylase beta chain</fullName>
        </recommendedName>
    </component>
</protein>
<evidence type="ECO:0000255" key="1">
    <source>
        <dbReference type="HAMAP-Rule" id="MF_00664"/>
    </source>
</evidence>
<evidence type="ECO:0000305" key="2"/>
<sequence length="235" mass="24764">MARRPSTDDLRSGPERFMALVKTTVPPVHPAGLPFIGAGLALAAAGRRNRWVRGAGLVAAGANAAFFRHPPRVPPTRPGVVVAPADGLICLVEDAEPPAELNLPARPVPRVSIFLSIFDAHVQRIPISGEVVAVEHRPGLFGSAELAAASEDNERNSVVIRTDTGAQVIAVQIAGLVARRIVCDLTTGDKVTIGDTYGLIRYGSRLDTYLPEGTDIQVLPGQRAVGGETILAELP</sequence>
<dbReference type="EC" id="4.1.1.65" evidence="1"/>
<dbReference type="EMBL" id="CP000384">
    <property type="protein sequence ID" value="ABG06715.1"/>
    <property type="status" value="ALT_INIT"/>
    <property type="molecule type" value="Genomic_DNA"/>
</dbReference>
<dbReference type="KEGG" id="mmc:Mmcs_0594"/>
<dbReference type="HOGENOM" id="CLU_072492_0_0_11"/>
<dbReference type="BioCyc" id="MSP164756:G1G6O-607-MONOMER"/>
<dbReference type="UniPathway" id="UPA00558">
    <property type="reaction ID" value="UER00616"/>
</dbReference>
<dbReference type="GO" id="GO:0005886">
    <property type="term" value="C:plasma membrane"/>
    <property type="evidence" value="ECO:0007669"/>
    <property type="project" value="UniProtKB-SubCell"/>
</dbReference>
<dbReference type="GO" id="GO:0004609">
    <property type="term" value="F:phosphatidylserine decarboxylase activity"/>
    <property type="evidence" value="ECO:0007669"/>
    <property type="project" value="UniProtKB-UniRule"/>
</dbReference>
<dbReference type="GO" id="GO:0006646">
    <property type="term" value="P:phosphatidylethanolamine biosynthetic process"/>
    <property type="evidence" value="ECO:0007669"/>
    <property type="project" value="UniProtKB-UniRule"/>
</dbReference>
<dbReference type="HAMAP" id="MF_00664">
    <property type="entry name" value="PS_decarb_PSD_A"/>
    <property type="match status" value="1"/>
</dbReference>
<dbReference type="InterPro" id="IPR003817">
    <property type="entry name" value="PS_Dcarbxylase"/>
</dbReference>
<dbReference type="InterPro" id="IPR033175">
    <property type="entry name" value="PSD-A"/>
</dbReference>
<dbReference type="NCBIfam" id="NF003679">
    <property type="entry name" value="PRK05305.1-3"/>
    <property type="match status" value="1"/>
</dbReference>
<dbReference type="PANTHER" id="PTHR35809">
    <property type="entry name" value="ARCHAETIDYLSERINE DECARBOXYLASE PROENZYME-RELATED"/>
    <property type="match status" value="1"/>
</dbReference>
<dbReference type="PANTHER" id="PTHR35809:SF1">
    <property type="entry name" value="ARCHAETIDYLSERINE DECARBOXYLASE PROENZYME-RELATED"/>
    <property type="match status" value="1"/>
</dbReference>
<dbReference type="Pfam" id="PF02666">
    <property type="entry name" value="PS_Dcarbxylase"/>
    <property type="match status" value="1"/>
</dbReference>
<reference key="1">
    <citation type="submission" date="2006-06" db="EMBL/GenBank/DDBJ databases">
        <title>Complete sequence of chromosome of Mycobacterium sp. MCS.</title>
        <authorList>
            <consortium name="US DOE Joint Genome Institute"/>
            <person name="Copeland A."/>
            <person name="Lucas S."/>
            <person name="Lapidus A."/>
            <person name="Barry K."/>
            <person name="Detter J.C."/>
            <person name="Glavina del Rio T."/>
            <person name="Hammon N."/>
            <person name="Israni S."/>
            <person name="Dalin E."/>
            <person name="Tice H."/>
            <person name="Pitluck S."/>
            <person name="Martinez M."/>
            <person name="Schmutz J."/>
            <person name="Larimer F."/>
            <person name="Land M."/>
            <person name="Hauser L."/>
            <person name="Kyrpides N."/>
            <person name="Kim E."/>
            <person name="Miller C.D."/>
            <person name="Hughes J.E."/>
            <person name="Anderson A.J."/>
            <person name="Sims R.C."/>
            <person name="Richardson P."/>
        </authorList>
    </citation>
    <scope>NUCLEOTIDE SEQUENCE [LARGE SCALE GENOMIC DNA]</scope>
    <source>
        <strain>MCS</strain>
    </source>
</reference>
<gene>
    <name evidence="1" type="primary">psd</name>
    <name type="ordered locus">Mmcs_0594</name>
</gene>
<comment type="function">
    <text evidence="1">Catalyzes the formation of phosphatidylethanolamine (PtdEtn) from phosphatidylserine (PtdSer).</text>
</comment>
<comment type="catalytic activity">
    <reaction evidence="1">
        <text>a 1,2-diacyl-sn-glycero-3-phospho-L-serine + H(+) = a 1,2-diacyl-sn-glycero-3-phosphoethanolamine + CO2</text>
        <dbReference type="Rhea" id="RHEA:20828"/>
        <dbReference type="ChEBI" id="CHEBI:15378"/>
        <dbReference type="ChEBI" id="CHEBI:16526"/>
        <dbReference type="ChEBI" id="CHEBI:57262"/>
        <dbReference type="ChEBI" id="CHEBI:64612"/>
        <dbReference type="EC" id="4.1.1.65"/>
    </reaction>
</comment>
<comment type="cofactor">
    <cofactor evidence="1">
        <name>pyruvate</name>
        <dbReference type="ChEBI" id="CHEBI:15361"/>
    </cofactor>
    <text evidence="1">Binds 1 pyruvoyl group covalently per subunit.</text>
</comment>
<comment type="pathway">
    <text evidence="1">Phospholipid metabolism; phosphatidylethanolamine biosynthesis; phosphatidylethanolamine from CDP-diacylglycerol: step 2/2.</text>
</comment>
<comment type="subunit">
    <text evidence="1">Heterodimer of a large membrane-associated beta subunit and a small pyruvoyl-containing alpha subunit.</text>
</comment>
<comment type="subcellular location">
    <subcellularLocation>
        <location evidence="1">Cell membrane</location>
        <topology evidence="1">Peripheral membrane protein</topology>
    </subcellularLocation>
</comment>
<comment type="PTM">
    <text evidence="1">Is synthesized initially as an inactive proenzyme. Formation of the active enzyme involves a self-maturation process in which the active site pyruvoyl group is generated from an internal serine residue via an autocatalytic post-translational modification. Two non-identical subunits are generated from the proenzyme in this reaction, and the pyruvate is formed at the N-terminus of the alpha chain, which is derived from the carboxyl end of the proenzyme. The post-translation cleavage follows an unusual pathway, termed non-hydrolytic serinolysis, in which the side chain hydroxyl group of the serine supplies its oxygen atom to form the C-terminus of the beta chain, while the remainder of the serine residue undergoes an oxidative deamination to produce ammonia and the pyruvoyl prosthetic group on the alpha chain.</text>
</comment>
<comment type="similarity">
    <text evidence="1">Belongs to the phosphatidylserine decarboxylase family. PSD-A subfamily.</text>
</comment>
<comment type="sequence caution" evidence="2">
    <conflict type="erroneous initiation">
        <sequence resource="EMBL-CDS" id="ABG06715"/>
    </conflict>
</comment>